<accession>B7ICN4</accession>
<sequence length="106" mass="12200">MYAIVESGGKQFRVEPGKVFFTERVVGKGEGEEVKLDKVLMVKTDDGKVLVGKPYLENVEIKGTIVEHGRARKVIVGKFRPRKNYRRIKGHRQWYTAIKVEEIQVK</sequence>
<name>RL21_THEAB</name>
<keyword id="KW-1185">Reference proteome</keyword>
<keyword id="KW-0687">Ribonucleoprotein</keyword>
<keyword id="KW-0689">Ribosomal protein</keyword>
<keyword id="KW-0694">RNA-binding</keyword>
<keyword id="KW-0699">rRNA-binding</keyword>
<protein>
    <recommendedName>
        <fullName evidence="1">Large ribosomal subunit protein bL21</fullName>
    </recommendedName>
    <alternativeName>
        <fullName evidence="2">50S ribosomal protein L21</fullName>
    </alternativeName>
</protein>
<evidence type="ECO:0000255" key="1">
    <source>
        <dbReference type="HAMAP-Rule" id="MF_01363"/>
    </source>
</evidence>
<evidence type="ECO:0000305" key="2"/>
<gene>
    <name evidence="1" type="primary">rplU</name>
    <name type="ordered locus">THA_1316</name>
</gene>
<feature type="chain" id="PRO_1000143861" description="Large ribosomal subunit protein bL21">
    <location>
        <begin position="1"/>
        <end position="106"/>
    </location>
</feature>
<organism>
    <name type="scientific">Thermosipho africanus (strain TCF52B)</name>
    <dbReference type="NCBI Taxonomy" id="484019"/>
    <lineage>
        <taxon>Bacteria</taxon>
        <taxon>Thermotogati</taxon>
        <taxon>Thermotogota</taxon>
        <taxon>Thermotogae</taxon>
        <taxon>Thermotogales</taxon>
        <taxon>Fervidobacteriaceae</taxon>
        <taxon>Thermosipho</taxon>
    </lineage>
</organism>
<comment type="function">
    <text evidence="1">This protein binds to 23S rRNA in the presence of protein L20.</text>
</comment>
<comment type="subunit">
    <text evidence="1">Part of the 50S ribosomal subunit. Contacts protein L20.</text>
</comment>
<comment type="similarity">
    <text evidence="1">Belongs to the bacterial ribosomal protein bL21 family.</text>
</comment>
<dbReference type="EMBL" id="CP001185">
    <property type="protein sequence ID" value="ACJ75761.1"/>
    <property type="molecule type" value="Genomic_DNA"/>
</dbReference>
<dbReference type="RefSeq" id="WP_012580143.1">
    <property type="nucleotide sequence ID" value="NC_011653.1"/>
</dbReference>
<dbReference type="SMR" id="B7ICN4"/>
<dbReference type="STRING" id="484019.THA_1316"/>
<dbReference type="KEGG" id="taf:THA_1316"/>
<dbReference type="eggNOG" id="COG0261">
    <property type="taxonomic scope" value="Bacteria"/>
</dbReference>
<dbReference type="HOGENOM" id="CLU_061463_3_2_0"/>
<dbReference type="OrthoDB" id="9813334at2"/>
<dbReference type="Proteomes" id="UP000002453">
    <property type="component" value="Chromosome"/>
</dbReference>
<dbReference type="GO" id="GO:0005737">
    <property type="term" value="C:cytoplasm"/>
    <property type="evidence" value="ECO:0007669"/>
    <property type="project" value="UniProtKB-ARBA"/>
</dbReference>
<dbReference type="GO" id="GO:1990904">
    <property type="term" value="C:ribonucleoprotein complex"/>
    <property type="evidence" value="ECO:0007669"/>
    <property type="project" value="UniProtKB-KW"/>
</dbReference>
<dbReference type="GO" id="GO:0005840">
    <property type="term" value="C:ribosome"/>
    <property type="evidence" value="ECO:0007669"/>
    <property type="project" value="UniProtKB-KW"/>
</dbReference>
<dbReference type="GO" id="GO:0019843">
    <property type="term" value="F:rRNA binding"/>
    <property type="evidence" value="ECO:0007669"/>
    <property type="project" value="UniProtKB-UniRule"/>
</dbReference>
<dbReference type="GO" id="GO:0003735">
    <property type="term" value="F:structural constituent of ribosome"/>
    <property type="evidence" value="ECO:0007669"/>
    <property type="project" value="InterPro"/>
</dbReference>
<dbReference type="GO" id="GO:0006412">
    <property type="term" value="P:translation"/>
    <property type="evidence" value="ECO:0007669"/>
    <property type="project" value="UniProtKB-UniRule"/>
</dbReference>
<dbReference type="HAMAP" id="MF_01363">
    <property type="entry name" value="Ribosomal_bL21"/>
    <property type="match status" value="1"/>
</dbReference>
<dbReference type="InterPro" id="IPR028909">
    <property type="entry name" value="bL21-like"/>
</dbReference>
<dbReference type="InterPro" id="IPR036164">
    <property type="entry name" value="bL21-like_sf"/>
</dbReference>
<dbReference type="InterPro" id="IPR001787">
    <property type="entry name" value="Ribosomal_bL21"/>
</dbReference>
<dbReference type="InterPro" id="IPR018258">
    <property type="entry name" value="Ribosomal_bL21_CS"/>
</dbReference>
<dbReference type="NCBIfam" id="TIGR00061">
    <property type="entry name" value="L21"/>
    <property type="match status" value="1"/>
</dbReference>
<dbReference type="PANTHER" id="PTHR21349">
    <property type="entry name" value="50S RIBOSOMAL PROTEIN L21"/>
    <property type="match status" value="1"/>
</dbReference>
<dbReference type="PANTHER" id="PTHR21349:SF0">
    <property type="entry name" value="LARGE RIBOSOMAL SUBUNIT PROTEIN BL21M"/>
    <property type="match status" value="1"/>
</dbReference>
<dbReference type="Pfam" id="PF00829">
    <property type="entry name" value="Ribosomal_L21p"/>
    <property type="match status" value="1"/>
</dbReference>
<dbReference type="SUPFAM" id="SSF141091">
    <property type="entry name" value="L21p-like"/>
    <property type="match status" value="1"/>
</dbReference>
<dbReference type="PROSITE" id="PS01169">
    <property type="entry name" value="RIBOSOMAL_L21"/>
    <property type="match status" value="1"/>
</dbReference>
<proteinExistence type="inferred from homology"/>
<reference key="1">
    <citation type="journal article" date="2009" name="J. Bacteriol.">
        <title>The genome of Thermosipho africanus TCF52B: lateral genetic connections to the Firmicutes and Archaea.</title>
        <authorList>
            <person name="Nesboe C.L."/>
            <person name="Bapteste E."/>
            <person name="Curtis B."/>
            <person name="Dahle H."/>
            <person name="Lopez P."/>
            <person name="Macleod D."/>
            <person name="Dlutek M."/>
            <person name="Bowman S."/>
            <person name="Zhaxybayeva O."/>
            <person name="Birkeland N.-K."/>
            <person name="Doolittle W.F."/>
        </authorList>
    </citation>
    <scope>NUCLEOTIDE SEQUENCE [LARGE SCALE GENOMIC DNA]</scope>
    <source>
        <strain>TCF52B</strain>
    </source>
</reference>